<sequence>MGSATVLDSIIEGVRADVAAREAAVSMDEVKEQAKRAPAPLDVMAALRASGIAVIAEVKRASPSRGALASIADPAELARAYEDGGARIISVLTEQRRFNGSLDDLDAVRAAVSIPVLRKDFIVRPYQIHEARAHGADMLLLIVAALEQPVLESLLERTESLGMTALVEVHTEEEADRALQAGASVIGVNARDLKTLEVDRDCFARIAPGLPSNVIRVAESGVRGTADLLAYAGAGADAVLVGEGLVTSGDPRSAVADLVTAGAHPSCPKPAR</sequence>
<feature type="chain" id="PRO_1000018507" description="Indole-3-glycerol phosphate synthase">
    <location>
        <begin position="1"/>
        <end position="272"/>
    </location>
</feature>
<accession>A1T8X3</accession>
<name>TRPC_MYCVP</name>
<comment type="catalytic activity">
    <reaction evidence="1">
        <text>1-(2-carboxyphenylamino)-1-deoxy-D-ribulose 5-phosphate + H(+) = (1S,2R)-1-C-(indol-3-yl)glycerol 3-phosphate + CO2 + H2O</text>
        <dbReference type="Rhea" id="RHEA:23476"/>
        <dbReference type="ChEBI" id="CHEBI:15377"/>
        <dbReference type="ChEBI" id="CHEBI:15378"/>
        <dbReference type="ChEBI" id="CHEBI:16526"/>
        <dbReference type="ChEBI" id="CHEBI:58613"/>
        <dbReference type="ChEBI" id="CHEBI:58866"/>
        <dbReference type="EC" id="4.1.1.48"/>
    </reaction>
</comment>
<comment type="pathway">
    <text evidence="1">Amino-acid biosynthesis; L-tryptophan biosynthesis; L-tryptophan from chorismate: step 4/5.</text>
</comment>
<comment type="similarity">
    <text evidence="1">Belongs to the TrpC family.</text>
</comment>
<gene>
    <name evidence="1" type="primary">trpC</name>
    <name type="ordered locus">Mvan_2816</name>
</gene>
<dbReference type="EC" id="4.1.1.48" evidence="1"/>
<dbReference type="EMBL" id="CP000511">
    <property type="protein sequence ID" value="ABM13623.1"/>
    <property type="molecule type" value="Genomic_DNA"/>
</dbReference>
<dbReference type="RefSeq" id="WP_011780031.1">
    <property type="nucleotide sequence ID" value="NZ_JACKSD010000326.1"/>
</dbReference>
<dbReference type="SMR" id="A1T8X3"/>
<dbReference type="STRING" id="350058.Mvan_2816"/>
<dbReference type="KEGG" id="mva:Mvan_2816"/>
<dbReference type="eggNOG" id="COG0134">
    <property type="taxonomic scope" value="Bacteria"/>
</dbReference>
<dbReference type="HOGENOM" id="CLU_034247_0_0_11"/>
<dbReference type="UniPathway" id="UPA00035">
    <property type="reaction ID" value="UER00043"/>
</dbReference>
<dbReference type="Proteomes" id="UP000009159">
    <property type="component" value="Chromosome"/>
</dbReference>
<dbReference type="GO" id="GO:0004425">
    <property type="term" value="F:indole-3-glycerol-phosphate synthase activity"/>
    <property type="evidence" value="ECO:0007669"/>
    <property type="project" value="UniProtKB-UniRule"/>
</dbReference>
<dbReference type="GO" id="GO:0004640">
    <property type="term" value="F:phosphoribosylanthranilate isomerase activity"/>
    <property type="evidence" value="ECO:0007669"/>
    <property type="project" value="TreeGrafter"/>
</dbReference>
<dbReference type="GO" id="GO:0000162">
    <property type="term" value="P:L-tryptophan biosynthetic process"/>
    <property type="evidence" value="ECO:0007669"/>
    <property type="project" value="UniProtKB-UniRule"/>
</dbReference>
<dbReference type="CDD" id="cd00331">
    <property type="entry name" value="IGPS"/>
    <property type="match status" value="1"/>
</dbReference>
<dbReference type="FunFam" id="3.20.20.70:FF:000024">
    <property type="entry name" value="Indole-3-glycerol phosphate synthase"/>
    <property type="match status" value="1"/>
</dbReference>
<dbReference type="Gene3D" id="3.20.20.70">
    <property type="entry name" value="Aldolase class I"/>
    <property type="match status" value="1"/>
</dbReference>
<dbReference type="HAMAP" id="MF_00134_A">
    <property type="entry name" value="IGPS_A"/>
    <property type="match status" value="1"/>
</dbReference>
<dbReference type="HAMAP" id="MF_00134_B">
    <property type="entry name" value="IGPS_B"/>
    <property type="match status" value="1"/>
</dbReference>
<dbReference type="InterPro" id="IPR013785">
    <property type="entry name" value="Aldolase_TIM"/>
</dbReference>
<dbReference type="InterPro" id="IPR045186">
    <property type="entry name" value="Indole-3-glycerol_P_synth"/>
</dbReference>
<dbReference type="InterPro" id="IPR013798">
    <property type="entry name" value="Indole-3-glycerol_P_synth_dom"/>
</dbReference>
<dbReference type="InterPro" id="IPR001468">
    <property type="entry name" value="Indole-3-GlycerolPSynthase_CS"/>
</dbReference>
<dbReference type="InterPro" id="IPR011060">
    <property type="entry name" value="RibuloseP-bd_barrel"/>
</dbReference>
<dbReference type="NCBIfam" id="NF001369">
    <property type="entry name" value="PRK00278.1-1"/>
    <property type="match status" value="1"/>
</dbReference>
<dbReference type="NCBIfam" id="NF001377">
    <property type="entry name" value="PRK00278.2-4"/>
    <property type="match status" value="1"/>
</dbReference>
<dbReference type="PANTHER" id="PTHR22854:SF2">
    <property type="entry name" value="INDOLE-3-GLYCEROL-PHOSPHATE SYNTHASE"/>
    <property type="match status" value="1"/>
</dbReference>
<dbReference type="PANTHER" id="PTHR22854">
    <property type="entry name" value="TRYPTOPHAN BIOSYNTHESIS PROTEIN"/>
    <property type="match status" value="1"/>
</dbReference>
<dbReference type="Pfam" id="PF00218">
    <property type="entry name" value="IGPS"/>
    <property type="match status" value="1"/>
</dbReference>
<dbReference type="SUPFAM" id="SSF51366">
    <property type="entry name" value="Ribulose-phoshate binding barrel"/>
    <property type="match status" value="1"/>
</dbReference>
<dbReference type="PROSITE" id="PS00614">
    <property type="entry name" value="IGPS"/>
    <property type="match status" value="1"/>
</dbReference>
<organism>
    <name type="scientific">Mycolicibacterium vanbaalenii (strain DSM 7251 / JCM 13017 / BCRC 16820 / KCTC 9966 / NRRL B-24157 / PYR-1)</name>
    <name type="common">Mycobacterium vanbaalenii</name>
    <dbReference type="NCBI Taxonomy" id="350058"/>
    <lineage>
        <taxon>Bacteria</taxon>
        <taxon>Bacillati</taxon>
        <taxon>Actinomycetota</taxon>
        <taxon>Actinomycetes</taxon>
        <taxon>Mycobacteriales</taxon>
        <taxon>Mycobacteriaceae</taxon>
        <taxon>Mycolicibacterium</taxon>
    </lineage>
</organism>
<keyword id="KW-0028">Amino-acid biosynthesis</keyword>
<keyword id="KW-0057">Aromatic amino acid biosynthesis</keyword>
<keyword id="KW-0210">Decarboxylase</keyword>
<keyword id="KW-0456">Lyase</keyword>
<keyword id="KW-0822">Tryptophan biosynthesis</keyword>
<protein>
    <recommendedName>
        <fullName evidence="1">Indole-3-glycerol phosphate synthase</fullName>
        <shortName evidence="1">IGPS</shortName>
        <ecNumber evidence="1">4.1.1.48</ecNumber>
    </recommendedName>
</protein>
<proteinExistence type="inferred from homology"/>
<reference key="1">
    <citation type="submission" date="2006-12" db="EMBL/GenBank/DDBJ databases">
        <title>Complete sequence of Mycobacterium vanbaalenii PYR-1.</title>
        <authorList>
            <consortium name="US DOE Joint Genome Institute"/>
            <person name="Copeland A."/>
            <person name="Lucas S."/>
            <person name="Lapidus A."/>
            <person name="Barry K."/>
            <person name="Detter J.C."/>
            <person name="Glavina del Rio T."/>
            <person name="Hammon N."/>
            <person name="Israni S."/>
            <person name="Dalin E."/>
            <person name="Tice H."/>
            <person name="Pitluck S."/>
            <person name="Singan V."/>
            <person name="Schmutz J."/>
            <person name="Larimer F."/>
            <person name="Land M."/>
            <person name="Hauser L."/>
            <person name="Kyrpides N."/>
            <person name="Anderson I.J."/>
            <person name="Miller C."/>
            <person name="Richardson P."/>
        </authorList>
    </citation>
    <scope>NUCLEOTIDE SEQUENCE [LARGE SCALE GENOMIC DNA]</scope>
    <source>
        <strain>DSM 7251 / JCM 13017 / BCRC 16820 / KCTC 9966 / NRRL B-24157 / PYR-1</strain>
    </source>
</reference>
<evidence type="ECO:0000255" key="1">
    <source>
        <dbReference type="HAMAP-Rule" id="MF_00134"/>
    </source>
</evidence>